<protein>
    <recommendedName>
        <fullName evidence="1">Large ribosomal subunit protein bL20</fullName>
    </recommendedName>
    <alternativeName>
        <fullName evidence="2">50S ribosomal protein L20</fullName>
    </alternativeName>
</protein>
<accession>A4YJM9</accession>
<evidence type="ECO:0000255" key="1">
    <source>
        <dbReference type="HAMAP-Rule" id="MF_00382"/>
    </source>
</evidence>
<evidence type="ECO:0000305" key="2"/>
<keyword id="KW-1185">Reference proteome</keyword>
<keyword id="KW-0687">Ribonucleoprotein</keyword>
<keyword id="KW-0689">Ribosomal protein</keyword>
<keyword id="KW-0694">RNA-binding</keyword>
<keyword id="KW-0699">rRNA-binding</keyword>
<gene>
    <name evidence="1" type="primary">rplT</name>
    <name type="ordered locus">BRADO0138</name>
</gene>
<feature type="chain" id="PRO_1000048933" description="Large ribosomal subunit protein bL20">
    <location>
        <begin position="1"/>
        <end position="119"/>
    </location>
</feature>
<proteinExistence type="inferred from homology"/>
<name>RL20_BRASO</name>
<sequence length="119" mass="13363">MSRVKRGVTAHAKHKKVYKAAKGFYGRRKNTIRAAKAAVEKAGQYAFRDRKRKKRTFRALWIQRLNAAVRPFELTYSRFIDGLSKSGITVDRKVLSDLAINEPAAFEAIVVKAKAALAA</sequence>
<reference key="1">
    <citation type="journal article" date="2007" name="Science">
        <title>Legumes symbioses: absence of nod genes in photosynthetic bradyrhizobia.</title>
        <authorList>
            <person name="Giraud E."/>
            <person name="Moulin L."/>
            <person name="Vallenet D."/>
            <person name="Barbe V."/>
            <person name="Cytryn E."/>
            <person name="Avarre J.-C."/>
            <person name="Jaubert M."/>
            <person name="Simon D."/>
            <person name="Cartieaux F."/>
            <person name="Prin Y."/>
            <person name="Bena G."/>
            <person name="Hannibal L."/>
            <person name="Fardoux J."/>
            <person name="Kojadinovic M."/>
            <person name="Vuillet L."/>
            <person name="Lajus A."/>
            <person name="Cruveiller S."/>
            <person name="Rouy Z."/>
            <person name="Mangenot S."/>
            <person name="Segurens B."/>
            <person name="Dossat C."/>
            <person name="Franck W.L."/>
            <person name="Chang W.-S."/>
            <person name="Saunders E."/>
            <person name="Bruce D."/>
            <person name="Richardson P."/>
            <person name="Normand P."/>
            <person name="Dreyfus B."/>
            <person name="Pignol D."/>
            <person name="Stacey G."/>
            <person name="Emerich D."/>
            <person name="Vermeglio A."/>
            <person name="Medigue C."/>
            <person name="Sadowsky M."/>
        </authorList>
    </citation>
    <scope>NUCLEOTIDE SEQUENCE [LARGE SCALE GENOMIC DNA]</scope>
    <source>
        <strain>ORS 278</strain>
    </source>
</reference>
<organism>
    <name type="scientific">Bradyrhizobium sp. (strain ORS 278)</name>
    <dbReference type="NCBI Taxonomy" id="114615"/>
    <lineage>
        <taxon>Bacteria</taxon>
        <taxon>Pseudomonadati</taxon>
        <taxon>Pseudomonadota</taxon>
        <taxon>Alphaproteobacteria</taxon>
        <taxon>Hyphomicrobiales</taxon>
        <taxon>Nitrobacteraceae</taxon>
        <taxon>Bradyrhizobium</taxon>
    </lineage>
</organism>
<dbReference type="EMBL" id="CU234118">
    <property type="protein sequence ID" value="CAL74105.1"/>
    <property type="molecule type" value="Genomic_DNA"/>
</dbReference>
<dbReference type="RefSeq" id="WP_006612326.1">
    <property type="nucleotide sequence ID" value="NC_009445.1"/>
</dbReference>
<dbReference type="SMR" id="A4YJM9"/>
<dbReference type="STRING" id="114615.BRADO0138"/>
<dbReference type="KEGG" id="bra:BRADO0138"/>
<dbReference type="eggNOG" id="COG0292">
    <property type="taxonomic scope" value="Bacteria"/>
</dbReference>
<dbReference type="HOGENOM" id="CLU_123265_0_1_5"/>
<dbReference type="OrthoDB" id="9808966at2"/>
<dbReference type="Proteomes" id="UP000001994">
    <property type="component" value="Chromosome"/>
</dbReference>
<dbReference type="GO" id="GO:1990904">
    <property type="term" value="C:ribonucleoprotein complex"/>
    <property type="evidence" value="ECO:0007669"/>
    <property type="project" value="UniProtKB-KW"/>
</dbReference>
<dbReference type="GO" id="GO:0005840">
    <property type="term" value="C:ribosome"/>
    <property type="evidence" value="ECO:0007669"/>
    <property type="project" value="UniProtKB-KW"/>
</dbReference>
<dbReference type="GO" id="GO:0019843">
    <property type="term" value="F:rRNA binding"/>
    <property type="evidence" value="ECO:0007669"/>
    <property type="project" value="UniProtKB-UniRule"/>
</dbReference>
<dbReference type="GO" id="GO:0003735">
    <property type="term" value="F:structural constituent of ribosome"/>
    <property type="evidence" value="ECO:0007669"/>
    <property type="project" value="InterPro"/>
</dbReference>
<dbReference type="GO" id="GO:0000027">
    <property type="term" value="P:ribosomal large subunit assembly"/>
    <property type="evidence" value="ECO:0007669"/>
    <property type="project" value="UniProtKB-UniRule"/>
</dbReference>
<dbReference type="GO" id="GO:0006412">
    <property type="term" value="P:translation"/>
    <property type="evidence" value="ECO:0007669"/>
    <property type="project" value="InterPro"/>
</dbReference>
<dbReference type="CDD" id="cd07026">
    <property type="entry name" value="Ribosomal_L20"/>
    <property type="match status" value="1"/>
</dbReference>
<dbReference type="FunFam" id="1.10.1900.20:FF:000001">
    <property type="entry name" value="50S ribosomal protein L20"/>
    <property type="match status" value="1"/>
</dbReference>
<dbReference type="Gene3D" id="6.10.160.10">
    <property type="match status" value="1"/>
</dbReference>
<dbReference type="Gene3D" id="1.10.1900.20">
    <property type="entry name" value="Ribosomal protein L20"/>
    <property type="match status" value="1"/>
</dbReference>
<dbReference type="HAMAP" id="MF_00382">
    <property type="entry name" value="Ribosomal_bL20"/>
    <property type="match status" value="1"/>
</dbReference>
<dbReference type="InterPro" id="IPR005813">
    <property type="entry name" value="Ribosomal_bL20"/>
</dbReference>
<dbReference type="InterPro" id="IPR049946">
    <property type="entry name" value="RIBOSOMAL_L20_CS"/>
</dbReference>
<dbReference type="InterPro" id="IPR035566">
    <property type="entry name" value="Ribosomal_protein_bL20_C"/>
</dbReference>
<dbReference type="NCBIfam" id="TIGR01032">
    <property type="entry name" value="rplT_bact"/>
    <property type="match status" value="1"/>
</dbReference>
<dbReference type="PANTHER" id="PTHR10986">
    <property type="entry name" value="39S RIBOSOMAL PROTEIN L20"/>
    <property type="match status" value="1"/>
</dbReference>
<dbReference type="Pfam" id="PF00453">
    <property type="entry name" value="Ribosomal_L20"/>
    <property type="match status" value="1"/>
</dbReference>
<dbReference type="PRINTS" id="PR00062">
    <property type="entry name" value="RIBOSOMALL20"/>
</dbReference>
<dbReference type="SUPFAM" id="SSF74731">
    <property type="entry name" value="Ribosomal protein L20"/>
    <property type="match status" value="1"/>
</dbReference>
<dbReference type="PROSITE" id="PS00937">
    <property type="entry name" value="RIBOSOMAL_L20"/>
    <property type="match status" value="1"/>
</dbReference>
<comment type="function">
    <text evidence="1">Binds directly to 23S ribosomal RNA and is necessary for the in vitro assembly process of the 50S ribosomal subunit. It is not involved in the protein synthesizing functions of that subunit.</text>
</comment>
<comment type="similarity">
    <text evidence="1">Belongs to the bacterial ribosomal protein bL20 family.</text>
</comment>